<feature type="signal peptide" evidence="4">
    <location>
        <begin position="1"/>
        <end position="26"/>
    </location>
</feature>
<feature type="chain" id="PRO_0000243936" description="Frizzled-5">
    <location>
        <begin position="27"/>
        <end position="585"/>
    </location>
</feature>
<feature type="topological domain" description="Extracellular" evidence="4">
    <location>
        <begin position="27"/>
        <end position="238"/>
    </location>
</feature>
<feature type="transmembrane region" description="Helical; Name=1" evidence="4">
    <location>
        <begin position="239"/>
        <end position="259"/>
    </location>
</feature>
<feature type="topological domain" description="Cytoplasmic" evidence="4">
    <location>
        <begin position="260"/>
        <end position="270"/>
    </location>
</feature>
<feature type="transmembrane region" description="Helical; Name=2" evidence="4">
    <location>
        <begin position="271"/>
        <end position="291"/>
    </location>
</feature>
<feature type="topological domain" description="Extracellular" evidence="4">
    <location>
        <begin position="292"/>
        <end position="315"/>
    </location>
</feature>
<feature type="transmembrane region" description="Helical; Name=3" evidence="4">
    <location>
        <begin position="316"/>
        <end position="336"/>
    </location>
</feature>
<feature type="topological domain" description="Cytoplasmic" evidence="4">
    <location>
        <begin position="337"/>
        <end position="358"/>
    </location>
</feature>
<feature type="transmembrane region" description="Helical; Name=4" evidence="4">
    <location>
        <begin position="359"/>
        <end position="379"/>
    </location>
</feature>
<feature type="topological domain" description="Extracellular" evidence="4">
    <location>
        <begin position="380"/>
        <end position="402"/>
    </location>
</feature>
<feature type="transmembrane region" description="Helical; Name=5" evidence="4">
    <location>
        <begin position="403"/>
        <end position="423"/>
    </location>
</feature>
<feature type="topological domain" description="Cytoplasmic" evidence="4">
    <location>
        <begin position="424"/>
        <end position="449"/>
    </location>
</feature>
<feature type="transmembrane region" description="Helical; Name=6" evidence="4">
    <location>
        <begin position="450"/>
        <end position="470"/>
    </location>
</feature>
<feature type="topological domain" description="Extracellular" evidence="4">
    <location>
        <begin position="471"/>
        <end position="500"/>
    </location>
</feature>
<feature type="transmembrane region" description="Helical; Name=7" evidence="4">
    <location>
        <begin position="501"/>
        <end position="521"/>
    </location>
</feature>
<feature type="topological domain" description="Cytoplasmic" evidence="4">
    <location>
        <begin position="522"/>
        <end position="585"/>
    </location>
</feature>
<feature type="domain" description="FZ" evidence="5">
    <location>
        <begin position="28"/>
        <end position="150"/>
    </location>
</feature>
<feature type="region of interest" description="Disordered" evidence="6">
    <location>
        <begin position="156"/>
        <end position="182"/>
    </location>
</feature>
<feature type="short sequence motif" description="PDZ-binding" evidence="1">
    <location>
        <begin position="582"/>
        <end position="584"/>
    </location>
</feature>
<feature type="glycosylation site" description="N-linked (GlcNAc...) asparagine" evidence="4">
    <location>
        <position position="47"/>
    </location>
</feature>
<feature type="glycosylation site" description="N-linked (GlcNAc...) asparagine" evidence="4">
    <location>
        <position position="151"/>
    </location>
</feature>
<feature type="disulfide bond" evidence="5">
    <location>
        <begin position="33"/>
        <end position="94"/>
    </location>
</feature>
<feature type="disulfide bond" evidence="5">
    <location>
        <begin position="41"/>
        <end position="87"/>
    </location>
</feature>
<feature type="disulfide bond" evidence="5">
    <location>
        <begin position="78"/>
        <end position="116"/>
    </location>
</feature>
<feature type="disulfide bond" evidence="5">
    <location>
        <begin position="105"/>
        <end position="147"/>
    </location>
</feature>
<feature type="disulfide bond" evidence="5">
    <location>
        <begin position="109"/>
        <end position="133"/>
    </location>
</feature>
<feature type="sequence conflict" description="In Ref. 3; BAC26789." evidence="12" ref="3">
    <original>P</original>
    <variation>T</variation>
    <location>
        <position position="4"/>
    </location>
</feature>
<feature type="sequence conflict" description="In Ref. 2; BAC53981." evidence="12" ref="2">
    <original>YG</original>
    <variation>S</variation>
    <location>
        <begin position="123"/>
        <end position="124"/>
    </location>
</feature>
<feature type="sequence conflict" description="In Ref. 1; AAG39355." evidence="12" ref="1">
    <original>G</original>
    <variation>S</variation>
    <location>
        <position position="402"/>
    </location>
</feature>
<feature type="sequence conflict" description="In Ref. 2; BAC53981." evidence="12" ref="2">
    <original>L</original>
    <variation>H</variation>
    <location>
        <position position="419"/>
    </location>
</feature>
<feature type="sequence conflict" description="In Ref. 2; BAC53981." evidence="12" ref="2">
    <original>E</original>
    <variation>G</variation>
    <location>
        <position position="444"/>
    </location>
</feature>
<feature type="sequence conflict" description="In Ref. 1; AAG39355." evidence="12" ref="1">
    <original>S</original>
    <variation>T</variation>
    <location>
        <position position="477"/>
    </location>
</feature>
<feature type="sequence conflict" description="In Ref. 1; AAG39355." evidence="12" ref="1">
    <original>A</original>
    <variation>P</variation>
    <location>
        <position position="481"/>
    </location>
</feature>
<feature type="sequence conflict" description="In Ref. 1; AAG39355." evidence="12" ref="1">
    <original>P</original>
    <variation>T</variation>
    <location>
        <position position="489"/>
    </location>
</feature>
<feature type="sequence conflict" description="In Ref. 2; BAC53981." evidence="12" ref="2">
    <original>I</original>
    <variation>F</variation>
    <location>
        <position position="521"/>
    </location>
</feature>
<proteinExistence type="evidence at protein level"/>
<dbReference type="EMBL" id="AF272146">
    <property type="protein sequence ID" value="AAG39355.1"/>
    <property type="status" value="ALT_FRAME"/>
    <property type="molecule type" value="mRNA"/>
</dbReference>
<dbReference type="EMBL" id="AB052910">
    <property type="protein sequence ID" value="BAC53981.1"/>
    <property type="molecule type" value="mRNA"/>
</dbReference>
<dbReference type="EMBL" id="AK030111">
    <property type="protein sequence ID" value="BAC26789.1"/>
    <property type="molecule type" value="mRNA"/>
</dbReference>
<dbReference type="EMBL" id="AC101915">
    <property type="status" value="NOT_ANNOTATED_CDS"/>
    <property type="molecule type" value="Genomic_DNA"/>
</dbReference>
<dbReference type="EMBL" id="CH466548">
    <property type="protein sequence ID" value="EDL00208.1"/>
    <property type="molecule type" value="Genomic_DNA"/>
</dbReference>
<dbReference type="EMBL" id="CH466548">
    <property type="protein sequence ID" value="EDL00209.1"/>
    <property type="molecule type" value="Genomic_DNA"/>
</dbReference>
<dbReference type="EMBL" id="AF005203">
    <property type="protein sequence ID" value="AAC01953.1"/>
    <property type="molecule type" value="mRNA"/>
</dbReference>
<dbReference type="CCDS" id="CCDS15008.1"/>
<dbReference type="RefSeq" id="NP_001036124.1">
    <property type="nucleotide sequence ID" value="NM_001042659.2"/>
</dbReference>
<dbReference type="RefSeq" id="NP_073558.2">
    <property type="nucleotide sequence ID" value="NM_022721.3"/>
</dbReference>
<dbReference type="PDB" id="8S7C">
    <property type="method" value="X-ray"/>
    <property type="resolution" value="4.70 A"/>
    <property type="chains" value="B/E/H=27-156"/>
</dbReference>
<dbReference type="PDBsum" id="8S7C"/>
<dbReference type="SMR" id="Q9EQD0"/>
<dbReference type="BioGRID" id="199778">
    <property type="interactions" value="2"/>
</dbReference>
<dbReference type="DIP" id="DIP-41260N"/>
<dbReference type="FunCoup" id="Q9EQD0">
    <property type="interactions" value="612"/>
</dbReference>
<dbReference type="IntAct" id="Q9EQD0">
    <property type="interactions" value="7"/>
</dbReference>
<dbReference type="MINT" id="Q9EQD0"/>
<dbReference type="STRING" id="10090.ENSMUSP00000067783"/>
<dbReference type="GlyCosmos" id="Q9EQD0">
    <property type="glycosylation" value="2 sites, No reported glycans"/>
</dbReference>
<dbReference type="GlyGen" id="Q9EQD0">
    <property type="glycosylation" value="3 sites"/>
</dbReference>
<dbReference type="iPTMnet" id="Q9EQD0"/>
<dbReference type="PhosphoSitePlus" id="Q9EQD0"/>
<dbReference type="SwissPalm" id="Q9EQD0"/>
<dbReference type="PaxDb" id="10090-ENSMUSP00000067783"/>
<dbReference type="ProteomicsDB" id="272926"/>
<dbReference type="Antibodypedia" id="19996">
    <property type="antibodies" value="415 antibodies from 36 providers"/>
</dbReference>
<dbReference type="DNASU" id="14367"/>
<dbReference type="Ensembl" id="ENSMUST00000063982.7">
    <property type="protein sequence ID" value="ENSMUSP00000067783.6"/>
    <property type="gene ID" value="ENSMUSG00000045005.10"/>
</dbReference>
<dbReference type="Ensembl" id="ENSMUST00000116133.4">
    <property type="protein sequence ID" value="ENSMUSP00000111828.3"/>
    <property type="gene ID" value="ENSMUSG00000045005.10"/>
</dbReference>
<dbReference type="GeneID" id="14367"/>
<dbReference type="KEGG" id="mmu:14367"/>
<dbReference type="UCSC" id="uc007bgy.1">
    <property type="organism name" value="mouse"/>
</dbReference>
<dbReference type="AGR" id="MGI:108571"/>
<dbReference type="CTD" id="7855"/>
<dbReference type="MGI" id="MGI:108571">
    <property type="gene designation" value="Fzd5"/>
</dbReference>
<dbReference type="VEuPathDB" id="HostDB:ENSMUSG00000045005"/>
<dbReference type="eggNOG" id="KOG3577">
    <property type="taxonomic scope" value="Eukaryota"/>
</dbReference>
<dbReference type="GeneTree" id="ENSGT00940000162639"/>
<dbReference type="HOGENOM" id="CLU_007873_2_0_1"/>
<dbReference type="InParanoid" id="Q9EQD0"/>
<dbReference type="OMA" id="NCAIPCK"/>
<dbReference type="OrthoDB" id="10053709at2759"/>
<dbReference type="PhylomeDB" id="Q9EQD0"/>
<dbReference type="TreeFam" id="TF317907"/>
<dbReference type="Reactome" id="R-MMU-4086398">
    <property type="pathway name" value="Ca2+ pathway"/>
</dbReference>
<dbReference type="Reactome" id="R-MMU-4608870">
    <property type="pathway name" value="Asymmetric localization of PCP proteins"/>
</dbReference>
<dbReference type="Reactome" id="R-MMU-4641262">
    <property type="pathway name" value="Disassembly of the destruction complex and recruitment of AXIN to the membrane"/>
</dbReference>
<dbReference type="Reactome" id="R-MMU-4641263">
    <property type="pathway name" value="Regulation of FZD by ubiquitination"/>
</dbReference>
<dbReference type="Reactome" id="R-MMU-5140745">
    <property type="pathway name" value="WNT5A-dependent internalization of FZD2, FZD5 and ROR2"/>
</dbReference>
<dbReference type="BioGRID-ORCS" id="14367">
    <property type="hits" value="2 hits in 78 CRISPR screens"/>
</dbReference>
<dbReference type="ChiTaRS" id="Fzd5">
    <property type="organism name" value="mouse"/>
</dbReference>
<dbReference type="PRO" id="PR:Q9EQD0"/>
<dbReference type="Proteomes" id="UP000000589">
    <property type="component" value="Chromosome 1"/>
</dbReference>
<dbReference type="RNAct" id="Q9EQD0">
    <property type="molecule type" value="protein"/>
</dbReference>
<dbReference type="Bgee" id="ENSMUSG00000045005">
    <property type="expression patterns" value="Expressed in optic fissure and 216 other cell types or tissues"/>
</dbReference>
<dbReference type="GO" id="GO:0030424">
    <property type="term" value="C:axon"/>
    <property type="evidence" value="ECO:0007669"/>
    <property type="project" value="UniProtKB-SubCell"/>
</dbReference>
<dbReference type="GO" id="GO:0005923">
    <property type="term" value="C:bicellular tight junction"/>
    <property type="evidence" value="ECO:0000314"/>
    <property type="project" value="MGI"/>
</dbReference>
<dbReference type="GO" id="GO:0009986">
    <property type="term" value="C:cell surface"/>
    <property type="evidence" value="ECO:0007669"/>
    <property type="project" value="Ensembl"/>
</dbReference>
<dbReference type="GO" id="GO:0030425">
    <property type="term" value="C:dendrite"/>
    <property type="evidence" value="ECO:0007669"/>
    <property type="project" value="UniProtKB-SubCell"/>
</dbReference>
<dbReference type="GO" id="GO:0005794">
    <property type="term" value="C:Golgi apparatus"/>
    <property type="evidence" value="ECO:0000314"/>
    <property type="project" value="BHF-UCL"/>
</dbReference>
<dbReference type="GO" id="GO:0000139">
    <property type="term" value="C:Golgi membrane"/>
    <property type="evidence" value="ECO:0007669"/>
    <property type="project" value="UniProtKB-SubCell"/>
</dbReference>
<dbReference type="GO" id="GO:0043204">
    <property type="term" value="C:perikaryon"/>
    <property type="evidence" value="ECO:0007669"/>
    <property type="project" value="UniProtKB-SubCell"/>
</dbReference>
<dbReference type="GO" id="GO:0048471">
    <property type="term" value="C:perinuclear region of cytoplasm"/>
    <property type="evidence" value="ECO:0000314"/>
    <property type="project" value="BHF-UCL"/>
</dbReference>
<dbReference type="GO" id="GO:0005886">
    <property type="term" value="C:plasma membrane"/>
    <property type="evidence" value="ECO:0000314"/>
    <property type="project" value="BHF-UCL"/>
</dbReference>
<dbReference type="GO" id="GO:0045202">
    <property type="term" value="C:synapse"/>
    <property type="evidence" value="ECO:0007669"/>
    <property type="project" value="UniProtKB-SubCell"/>
</dbReference>
<dbReference type="GO" id="GO:0001540">
    <property type="term" value="F:amyloid-beta binding"/>
    <property type="evidence" value="ECO:0007669"/>
    <property type="project" value="Ensembl"/>
</dbReference>
<dbReference type="GO" id="GO:0004930">
    <property type="term" value="F:G protein-coupled receptor activity"/>
    <property type="evidence" value="ECO:0007669"/>
    <property type="project" value="UniProtKB-KW"/>
</dbReference>
<dbReference type="GO" id="GO:0008289">
    <property type="term" value="F:lipid binding"/>
    <property type="evidence" value="ECO:0007669"/>
    <property type="project" value="UniProtKB-KW"/>
</dbReference>
<dbReference type="GO" id="GO:0019901">
    <property type="term" value="F:protein kinase binding"/>
    <property type="evidence" value="ECO:0007669"/>
    <property type="project" value="Ensembl"/>
</dbReference>
<dbReference type="GO" id="GO:0044877">
    <property type="term" value="F:protein-containing complex binding"/>
    <property type="evidence" value="ECO:0007669"/>
    <property type="project" value="Ensembl"/>
</dbReference>
<dbReference type="GO" id="GO:0031625">
    <property type="term" value="F:ubiquitin protein ligase binding"/>
    <property type="evidence" value="ECO:0007669"/>
    <property type="project" value="Ensembl"/>
</dbReference>
<dbReference type="GO" id="GO:0042813">
    <property type="term" value="F:Wnt receptor activity"/>
    <property type="evidence" value="ECO:0000250"/>
    <property type="project" value="UniProtKB"/>
</dbReference>
<dbReference type="GO" id="GO:0017147">
    <property type="term" value="F:Wnt-protein binding"/>
    <property type="evidence" value="ECO:0000353"/>
    <property type="project" value="MGI"/>
</dbReference>
<dbReference type="GO" id="GO:0001525">
    <property type="term" value="P:angiogenesis"/>
    <property type="evidence" value="ECO:0000315"/>
    <property type="project" value="MGI"/>
</dbReference>
<dbReference type="GO" id="GO:0008595">
    <property type="term" value="P:anterior/posterior axis specification, embryo"/>
    <property type="evidence" value="ECO:0007669"/>
    <property type="project" value="Ensembl"/>
</dbReference>
<dbReference type="GO" id="GO:0060561">
    <property type="term" value="P:apoptotic process involved in morphogenesis"/>
    <property type="evidence" value="ECO:0000315"/>
    <property type="project" value="MGI"/>
</dbReference>
<dbReference type="GO" id="GO:0060670">
    <property type="term" value="P:branching involved in labyrinthine layer morphogenesis"/>
    <property type="evidence" value="ECO:0000315"/>
    <property type="project" value="MGI"/>
</dbReference>
<dbReference type="GO" id="GO:0060070">
    <property type="term" value="P:canonical Wnt signaling pathway"/>
    <property type="evidence" value="ECO:0000315"/>
    <property type="project" value="MGI"/>
</dbReference>
<dbReference type="GO" id="GO:0071219">
    <property type="term" value="P:cellular response to molecule of bacterial origin"/>
    <property type="evidence" value="ECO:0007669"/>
    <property type="project" value="Ensembl"/>
</dbReference>
<dbReference type="GO" id="GO:0060718">
    <property type="term" value="P:chorionic trophoblast cell differentiation"/>
    <property type="evidence" value="ECO:0000315"/>
    <property type="project" value="MGI"/>
</dbReference>
<dbReference type="GO" id="GO:0031076">
    <property type="term" value="P:embryonic camera-type eye development"/>
    <property type="evidence" value="ECO:0000315"/>
    <property type="project" value="MGI"/>
</dbReference>
<dbReference type="GO" id="GO:0048596">
    <property type="term" value="P:embryonic camera-type eye morphogenesis"/>
    <property type="evidence" value="ECO:0000315"/>
    <property type="project" value="CACAO"/>
</dbReference>
<dbReference type="GO" id="GO:0001654">
    <property type="term" value="P:eye development"/>
    <property type="evidence" value="ECO:0000250"/>
    <property type="project" value="UniProtKB"/>
</dbReference>
<dbReference type="GO" id="GO:0002071">
    <property type="term" value="P:glandular epithelial cell maturation"/>
    <property type="evidence" value="ECO:0000315"/>
    <property type="project" value="MGI"/>
</dbReference>
<dbReference type="GO" id="GO:0060574">
    <property type="term" value="P:intestinal epithelial cell maturation"/>
    <property type="evidence" value="ECO:0000315"/>
    <property type="project" value="MGI"/>
</dbReference>
<dbReference type="GO" id="GO:0060716">
    <property type="term" value="P:labyrinthine layer blood vessel development"/>
    <property type="evidence" value="ECO:0000315"/>
    <property type="project" value="MGI"/>
</dbReference>
<dbReference type="GO" id="GO:0008285">
    <property type="term" value="P:negative regulation of cell population proliferation"/>
    <property type="evidence" value="ECO:0000315"/>
    <property type="project" value="MGI"/>
</dbReference>
<dbReference type="GO" id="GO:0035567">
    <property type="term" value="P:non-canonical Wnt signaling pathway"/>
    <property type="evidence" value="ECO:0000250"/>
    <property type="project" value="UniProtKB"/>
</dbReference>
<dbReference type="GO" id="GO:0032731">
    <property type="term" value="P:positive regulation of interleukin-1 beta production"/>
    <property type="evidence" value="ECO:0000316"/>
    <property type="project" value="ARUK-UCL"/>
</dbReference>
<dbReference type="GO" id="GO:0002726">
    <property type="term" value="P:positive regulation of T cell cytokine production"/>
    <property type="evidence" value="ECO:0007669"/>
    <property type="project" value="Ensembl"/>
</dbReference>
<dbReference type="GO" id="GO:0045944">
    <property type="term" value="P:positive regulation of transcription by RNA polymerase II"/>
    <property type="evidence" value="ECO:0000315"/>
    <property type="project" value="MGI"/>
</dbReference>
<dbReference type="GO" id="GO:0032760">
    <property type="term" value="P:positive regulation of tumor necrosis factor production"/>
    <property type="evidence" value="ECO:0000316"/>
    <property type="project" value="ARUK-UCL"/>
</dbReference>
<dbReference type="GO" id="GO:0032729">
    <property type="term" value="P:positive regulation of type II interferon production"/>
    <property type="evidence" value="ECO:0007669"/>
    <property type="project" value="Ensembl"/>
</dbReference>
<dbReference type="GO" id="GO:0031077">
    <property type="term" value="P:post-embryonic camera-type eye development"/>
    <property type="evidence" value="ECO:0000315"/>
    <property type="project" value="CACAO"/>
</dbReference>
<dbReference type="GO" id="GO:2000810">
    <property type="term" value="P:regulation of bicellular tight junction assembly"/>
    <property type="evidence" value="ECO:0000315"/>
    <property type="project" value="MGI"/>
</dbReference>
<dbReference type="GO" id="GO:1901382">
    <property type="term" value="P:regulation of chorionic trophoblast cell proliferation"/>
    <property type="evidence" value="ECO:0000315"/>
    <property type="project" value="MGI"/>
</dbReference>
<dbReference type="GO" id="GO:0060061">
    <property type="term" value="P:Spemann organizer formation"/>
    <property type="evidence" value="ECO:0007669"/>
    <property type="project" value="Ensembl"/>
</dbReference>
<dbReference type="GO" id="GO:0060715">
    <property type="term" value="P:syncytiotrophoblast cell differentiation involved in labyrinthine layer development"/>
    <property type="evidence" value="ECO:0000315"/>
    <property type="project" value="MGI"/>
</dbReference>
<dbReference type="GO" id="GO:0033077">
    <property type="term" value="P:T cell differentiation in thymus"/>
    <property type="evidence" value="ECO:0000315"/>
    <property type="project" value="MGI"/>
</dbReference>
<dbReference type="GO" id="GO:0001944">
    <property type="term" value="P:vasculature development"/>
    <property type="evidence" value="ECO:0000315"/>
    <property type="project" value="MGI"/>
</dbReference>
<dbReference type="GO" id="GO:0016055">
    <property type="term" value="P:Wnt signaling pathway"/>
    <property type="evidence" value="ECO:0000316"/>
    <property type="project" value="MGI"/>
</dbReference>
<dbReference type="CDD" id="cd07460">
    <property type="entry name" value="CRD_FZ5"/>
    <property type="match status" value="1"/>
</dbReference>
<dbReference type="FunFam" id="1.10.2000.10:FF:000004">
    <property type="entry name" value="Frizzled class receptor 8a"/>
    <property type="match status" value="1"/>
</dbReference>
<dbReference type="FunFam" id="1.20.1070.10:FF:000053">
    <property type="entry name" value="Frizzled class receptor 8a"/>
    <property type="match status" value="1"/>
</dbReference>
<dbReference type="Gene3D" id="1.10.2000.10">
    <property type="entry name" value="Frizzled cysteine-rich domain"/>
    <property type="match status" value="1"/>
</dbReference>
<dbReference type="Gene3D" id="1.20.1070.10">
    <property type="entry name" value="Rhodopsin 7-helix transmembrane proteins"/>
    <property type="match status" value="1"/>
</dbReference>
<dbReference type="InterPro" id="IPR015526">
    <property type="entry name" value="Frizzled/SFRP"/>
</dbReference>
<dbReference type="InterPro" id="IPR000539">
    <property type="entry name" value="Frizzled/Smoothened_7TM"/>
</dbReference>
<dbReference type="InterPro" id="IPR020067">
    <property type="entry name" value="Frizzled_dom"/>
</dbReference>
<dbReference type="InterPro" id="IPR036790">
    <property type="entry name" value="Frizzled_dom_sf"/>
</dbReference>
<dbReference type="InterPro" id="IPR037441">
    <property type="entry name" value="FZ5_CRD"/>
</dbReference>
<dbReference type="InterPro" id="IPR017981">
    <property type="entry name" value="GPCR_2-like_7TM"/>
</dbReference>
<dbReference type="PANTHER" id="PTHR11309">
    <property type="entry name" value="FRIZZLED"/>
    <property type="match status" value="1"/>
</dbReference>
<dbReference type="PANTHER" id="PTHR11309:SF136">
    <property type="entry name" value="FRIZZLED-5"/>
    <property type="match status" value="1"/>
</dbReference>
<dbReference type="Pfam" id="PF01534">
    <property type="entry name" value="Frizzled"/>
    <property type="match status" value="1"/>
</dbReference>
<dbReference type="Pfam" id="PF01392">
    <property type="entry name" value="Fz"/>
    <property type="match status" value="1"/>
</dbReference>
<dbReference type="PRINTS" id="PR00489">
    <property type="entry name" value="FRIZZLED"/>
</dbReference>
<dbReference type="SMART" id="SM00063">
    <property type="entry name" value="FRI"/>
    <property type="match status" value="1"/>
</dbReference>
<dbReference type="SMART" id="SM01330">
    <property type="entry name" value="Frizzled"/>
    <property type="match status" value="1"/>
</dbReference>
<dbReference type="SUPFAM" id="SSF63501">
    <property type="entry name" value="Frizzled cysteine-rich domain"/>
    <property type="match status" value="1"/>
</dbReference>
<dbReference type="PROSITE" id="PS50038">
    <property type="entry name" value="FZ"/>
    <property type="match status" value="1"/>
</dbReference>
<dbReference type="PROSITE" id="PS50261">
    <property type="entry name" value="G_PROTEIN_RECEP_F2_4"/>
    <property type="match status" value="1"/>
</dbReference>
<reference key="1">
    <citation type="journal article" date="2001" name="Development">
        <title>Mouse Wnt receptor gene Fzd5 is essential for yolk sac and placental angiogenesis.</title>
        <authorList>
            <person name="Ishikawa T."/>
            <person name="Tamai Y."/>
            <person name="Zorn A.M."/>
            <person name="Yoshida H."/>
            <person name="Seldin M.F."/>
            <person name="Nishikawa S."/>
            <person name="Taketo M.M."/>
        </authorList>
    </citation>
    <scope>NUCLEOTIDE SEQUENCE [MRNA]</scope>
    <scope>FUNCTION</scope>
    <scope>DISRUPTION PHENOTYPE</scope>
    <scope>DEVELOPMENTAL STAGE</scope>
    <source>
        <strain>C57BL/6N</strain>
        <tissue>Intestine</tissue>
    </source>
</reference>
<reference key="2">
    <citation type="submission" date="2000-12" db="EMBL/GenBank/DDBJ databases">
        <title>Molecular cloning and characterization of a gene encoding for rat Frizzled 5.</title>
        <authorList>
            <person name="Ito S."/>
            <person name="Imamura T."/>
            <person name="Shiota K."/>
        </authorList>
    </citation>
    <scope>NUCLEOTIDE SEQUENCE [MRNA]</scope>
</reference>
<reference key="3">
    <citation type="journal article" date="2005" name="Science">
        <title>The transcriptional landscape of the mammalian genome.</title>
        <authorList>
            <person name="Carninci P."/>
            <person name="Kasukawa T."/>
            <person name="Katayama S."/>
            <person name="Gough J."/>
            <person name="Frith M.C."/>
            <person name="Maeda N."/>
            <person name="Oyama R."/>
            <person name="Ravasi T."/>
            <person name="Lenhard B."/>
            <person name="Wells C."/>
            <person name="Kodzius R."/>
            <person name="Shimokawa K."/>
            <person name="Bajic V.B."/>
            <person name="Brenner S.E."/>
            <person name="Batalov S."/>
            <person name="Forrest A.R."/>
            <person name="Zavolan M."/>
            <person name="Davis M.J."/>
            <person name="Wilming L.G."/>
            <person name="Aidinis V."/>
            <person name="Allen J.E."/>
            <person name="Ambesi-Impiombato A."/>
            <person name="Apweiler R."/>
            <person name="Aturaliya R.N."/>
            <person name="Bailey T.L."/>
            <person name="Bansal M."/>
            <person name="Baxter L."/>
            <person name="Beisel K.W."/>
            <person name="Bersano T."/>
            <person name="Bono H."/>
            <person name="Chalk A.M."/>
            <person name="Chiu K.P."/>
            <person name="Choudhary V."/>
            <person name="Christoffels A."/>
            <person name="Clutterbuck D.R."/>
            <person name="Crowe M.L."/>
            <person name="Dalla E."/>
            <person name="Dalrymple B.P."/>
            <person name="de Bono B."/>
            <person name="Della Gatta G."/>
            <person name="di Bernardo D."/>
            <person name="Down T."/>
            <person name="Engstrom P."/>
            <person name="Fagiolini M."/>
            <person name="Faulkner G."/>
            <person name="Fletcher C.F."/>
            <person name="Fukushima T."/>
            <person name="Furuno M."/>
            <person name="Futaki S."/>
            <person name="Gariboldi M."/>
            <person name="Georgii-Hemming P."/>
            <person name="Gingeras T.R."/>
            <person name="Gojobori T."/>
            <person name="Green R.E."/>
            <person name="Gustincich S."/>
            <person name="Harbers M."/>
            <person name="Hayashi Y."/>
            <person name="Hensch T.K."/>
            <person name="Hirokawa N."/>
            <person name="Hill D."/>
            <person name="Huminiecki L."/>
            <person name="Iacono M."/>
            <person name="Ikeo K."/>
            <person name="Iwama A."/>
            <person name="Ishikawa T."/>
            <person name="Jakt M."/>
            <person name="Kanapin A."/>
            <person name="Katoh M."/>
            <person name="Kawasawa Y."/>
            <person name="Kelso J."/>
            <person name="Kitamura H."/>
            <person name="Kitano H."/>
            <person name="Kollias G."/>
            <person name="Krishnan S.P."/>
            <person name="Kruger A."/>
            <person name="Kummerfeld S.K."/>
            <person name="Kurochkin I.V."/>
            <person name="Lareau L.F."/>
            <person name="Lazarevic D."/>
            <person name="Lipovich L."/>
            <person name="Liu J."/>
            <person name="Liuni S."/>
            <person name="McWilliam S."/>
            <person name="Madan Babu M."/>
            <person name="Madera M."/>
            <person name="Marchionni L."/>
            <person name="Matsuda H."/>
            <person name="Matsuzawa S."/>
            <person name="Miki H."/>
            <person name="Mignone F."/>
            <person name="Miyake S."/>
            <person name="Morris K."/>
            <person name="Mottagui-Tabar S."/>
            <person name="Mulder N."/>
            <person name="Nakano N."/>
            <person name="Nakauchi H."/>
            <person name="Ng P."/>
            <person name="Nilsson R."/>
            <person name="Nishiguchi S."/>
            <person name="Nishikawa S."/>
            <person name="Nori F."/>
            <person name="Ohara O."/>
            <person name="Okazaki Y."/>
            <person name="Orlando V."/>
            <person name="Pang K.C."/>
            <person name="Pavan W.J."/>
            <person name="Pavesi G."/>
            <person name="Pesole G."/>
            <person name="Petrovsky N."/>
            <person name="Piazza S."/>
            <person name="Reed J."/>
            <person name="Reid J.F."/>
            <person name="Ring B.Z."/>
            <person name="Ringwald M."/>
            <person name="Rost B."/>
            <person name="Ruan Y."/>
            <person name="Salzberg S.L."/>
            <person name="Sandelin A."/>
            <person name="Schneider C."/>
            <person name="Schoenbach C."/>
            <person name="Sekiguchi K."/>
            <person name="Semple C.A."/>
            <person name="Seno S."/>
            <person name="Sessa L."/>
            <person name="Sheng Y."/>
            <person name="Shibata Y."/>
            <person name="Shimada H."/>
            <person name="Shimada K."/>
            <person name="Silva D."/>
            <person name="Sinclair B."/>
            <person name="Sperling S."/>
            <person name="Stupka E."/>
            <person name="Sugiura K."/>
            <person name="Sultana R."/>
            <person name="Takenaka Y."/>
            <person name="Taki K."/>
            <person name="Tammoja K."/>
            <person name="Tan S.L."/>
            <person name="Tang S."/>
            <person name="Taylor M.S."/>
            <person name="Tegner J."/>
            <person name="Teichmann S.A."/>
            <person name="Ueda H.R."/>
            <person name="van Nimwegen E."/>
            <person name="Verardo R."/>
            <person name="Wei C.L."/>
            <person name="Yagi K."/>
            <person name="Yamanishi H."/>
            <person name="Zabarovsky E."/>
            <person name="Zhu S."/>
            <person name="Zimmer A."/>
            <person name="Hide W."/>
            <person name="Bult C."/>
            <person name="Grimmond S.M."/>
            <person name="Teasdale R.D."/>
            <person name="Liu E.T."/>
            <person name="Brusic V."/>
            <person name="Quackenbush J."/>
            <person name="Wahlestedt C."/>
            <person name="Mattick J.S."/>
            <person name="Hume D.A."/>
            <person name="Kai C."/>
            <person name="Sasaki D."/>
            <person name="Tomaru Y."/>
            <person name="Fukuda S."/>
            <person name="Kanamori-Katayama M."/>
            <person name="Suzuki M."/>
            <person name="Aoki J."/>
            <person name="Arakawa T."/>
            <person name="Iida J."/>
            <person name="Imamura K."/>
            <person name="Itoh M."/>
            <person name="Kato T."/>
            <person name="Kawaji H."/>
            <person name="Kawagashira N."/>
            <person name="Kawashima T."/>
            <person name="Kojima M."/>
            <person name="Kondo S."/>
            <person name="Konno H."/>
            <person name="Nakano K."/>
            <person name="Ninomiya N."/>
            <person name="Nishio T."/>
            <person name="Okada M."/>
            <person name="Plessy C."/>
            <person name="Shibata K."/>
            <person name="Shiraki T."/>
            <person name="Suzuki S."/>
            <person name="Tagami M."/>
            <person name="Waki K."/>
            <person name="Watahiki A."/>
            <person name="Okamura-Oho Y."/>
            <person name="Suzuki H."/>
            <person name="Kawai J."/>
            <person name="Hayashizaki Y."/>
        </authorList>
    </citation>
    <scope>NUCLEOTIDE SEQUENCE [LARGE SCALE MRNA]</scope>
    <source>
        <strain>C57BL/6J</strain>
        <tissue>Testis</tissue>
    </source>
</reference>
<reference key="4">
    <citation type="journal article" date="2009" name="PLoS Biol.">
        <title>Lineage-specific biology revealed by a finished genome assembly of the mouse.</title>
        <authorList>
            <person name="Church D.M."/>
            <person name="Goodstadt L."/>
            <person name="Hillier L.W."/>
            <person name="Zody M.C."/>
            <person name="Goldstein S."/>
            <person name="She X."/>
            <person name="Bult C.J."/>
            <person name="Agarwala R."/>
            <person name="Cherry J.L."/>
            <person name="DiCuccio M."/>
            <person name="Hlavina W."/>
            <person name="Kapustin Y."/>
            <person name="Meric P."/>
            <person name="Maglott D."/>
            <person name="Birtle Z."/>
            <person name="Marques A.C."/>
            <person name="Graves T."/>
            <person name="Zhou S."/>
            <person name="Teague B."/>
            <person name="Potamousis K."/>
            <person name="Churas C."/>
            <person name="Place M."/>
            <person name="Herschleb J."/>
            <person name="Runnheim R."/>
            <person name="Forrest D."/>
            <person name="Amos-Landgraf J."/>
            <person name="Schwartz D.C."/>
            <person name="Cheng Z."/>
            <person name="Lindblad-Toh K."/>
            <person name="Eichler E.E."/>
            <person name="Ponting C.P."/>
        </authorList>
    </citation>
    <scope>NUCLEOTIDE SEQUENCE [LARGE SCALE GENOMIC DNA]</scope>
    <source>
        <strain>C57BL/6J</strain>
    </source>
</reference>
<reference key="5">
    <citation type="submission" date="2005-07" db="EMBL/GenBank/DDBJ databases">
        <authorList>
            <person name="Mural R.J."/>
            <person name="Adams M.D."/>
            <person name="Myers E.W."/>
            <person name="Smith H.O."/>
            <person name="Venter J.C."/>
        </authorList>
    </citation>
    <scope>NUCLEOTIDE SEQUENCE [LARGE SCALE GENOMIC DNA]</scope>
</reference>
<reference key="6">
    <citation type="submission" date="1997-08" db="EMBL/GenBank/DDBJ databases">
        <authorList>
            <person name="Johnson M.A."/>
            <person name="Greenberg N.M."/>
        </authorList>
    </citation>
    <scope>NUCLEOTIDE SEQUENCE [MRNA] OF 211-300</scope>
    <source>
        <strain>C57BL/6J</strain>
        <tissue>Prostate</tissue>
    </source>
</reference>
<reference key="7">
    <citation type="journal article" date="1996" name="J. Biol. Chem.">
        <title>A large family of putative transmembrane receptors homologous to the product of the Drosophila tissue polarity gene frizzled.</title>
        <authorList>
            <person name="Wang Y."/>
            <person name="Macke J.P."/>
            <person name="Abella B.S."/>
            <person name="Andreasson K."/>
            <person name="Worley P."/>
            <person name="Gilbert D.J."/>
            <person name="Copeland N.G."/>
            <person name="Jenkins N.A."/>
            <person name="Nathans J."/>
        </authorList>
    </citation>
    <scope>TISSUE SPECIFICITY</scope>
</reference>
<reference key="8">
    <citation type="journal article" date="2001" name="Biochem. Biophys. Res. Commun.">
        <title>Identification of a PDZ domain containing Golgi protein, GOPC, as an interaction partner of frizzled.</title>
        <authorList>
            <person name="Yao R."/>
            <person name="Maeda T."/>
            <person name="Takada S."/>
            <person name="Noda T."/>
        </authorList>
    </citation>
    <scope>INTERACTION WITH GOPC</scope>
    <scope>SUBCELLULAR LOCATION</scope>
</reference>
<reference key="9">
    <citation type="journal article" date="2008" name="Biochem. Biophys. Res. Commun.">
        <title>Wnt7a interaction with Fzd5 and detection of signaling activation using a split eGFP.</title>
        <authorList>
            <person name="Carmon K.S."/>
            <person name="Loose D.S."/>
        </authorList>
    </citation>
    <scope>INTERACTION WITH WNT7A</scope>
    <scope>FUNCTION</scope>
</reference>
<reference key="10">
    <citation type="journal article" date="2010" name="Development">
        <title>Frizzled-5, a receptor for the synaptic organizer Wnt7a, regulates activity-mediated synaptogenesis.</title>
        <authorList>
            <person name="Sahores M."/>
            <person name="Gibb A."/>
            <person name="Salinas P.C."/>
        </authorList>
    </citation>
    <scope>INTERACTION WITH WNT7A</scope>
    <scope>TISSUE SPECIFICITY</scope>
    <scope>SUBCELLULAR LOCATION</scope>
</reference>
<sequence>MARPDPSAPPSLLLLLLAQLVGRAAAASKAPVCQEITVPMCRGIGYNLTHMPNQFNHDTQDEAGLEVHQFWPLVEIHCSPDLRFFLCSMYTPICLPDYHKPLPPCRSVCERAKAGCSPLMRQYGFAWPERMSCDRLPVLGGDAEVLCMDYNRSEATTASPKSFPAKPTLPGPPGAPSSGGECPSGGPSVCTCREPFVPILKESHPLYNKVRTGQVPNCAVPCYQPSFSPDERTFATFWIGLWSVLCFISTSTTVATFLIDMERFRYPERPIIFLSACYLCVSLGFLVRLVVGHASVACSREHSHIHYETTGPALCTVVFLLVYFFGMASSIWWVILSLTWFLAAGMKWGNEAIAGYAQYFHLAAWLIPSVKSITALALSSVDGDPVAGICYVGNQNLNSLRGFVLGPLVLYLLVGTLFLLAGFVSLFRIRSVIKQGGTKTDKLEKLMIRIGIFTLLYTVPASIVVACYLYEQHYRESWEAALTCACPGPDAGQPRAKPEYWVLMLKYFMCLVVGITSGVWIWSGKTLESWRRFTSRCCCSSRRGHKSGGAMAAGDYAEASAALTGRTGPPGPTAAYHKQVSLSHV</sequence>
<accession>Q9EQD0</accession>
<accession>G5E8F0</accession>
<accession>O08975</accession>
<accession>Q8BMR2</accession>
<accession>Q8CHK9</accession>
<protein>
    <recommendedName>
        <fullName>Frizzled-5</fullName>
        <shortName>Fz-5</shortName>
        <shortName>mFz5</shortName>
    </recommendedName>
</protein>
<comment type="function">
    <text evidence="2 7 9">Receptor for Wnt proteins (PubMed:11092808, PubMed:18230341). Functions in the canonical Wnt/beta-catenin signaling pathway (PubMed:18230341). In vitro activates WNT2, WNT10B, WNT5A, but not WNT2B or WNT4 signaling (PubMed:11092808). In neurons, activation by WNT7A promotes formation of synapses (By similarity). May be involved in transduction and intercellular transmission of polarity information during tissue morphogenesis and/or in differentiated tissues (Probable). Plays a role in yolk sac angiogenesis and in placental vascularization (PubMed:11092808). Plays a role in ocular development (By similarity).</text>
</comment>
<comment type="subunit">
    <text evidence="2 8 9 10">Binding of unsaturated fatty acid molecules (via FZ domain) promotes homodimerization (via FZ domain). Interacts with WNT2B (By similarity). Interacts with WNT7A (PubMed:18230341, PubMed:20530549). Interacts with GOPC (PubMed:11520064).</text>
</comment>
<comment type="interaction">
    <interactant intactId="EBI-7938232">
        <id>Q9EQD0</id>
    </interactant>
    <interactant intactId="EBI-296357">
        <id>Q8BH60</id>
        <label>Gopc</label>
    </interactant>
    <organismsDiffer>false</organismsDiffer>
    <experiments>3</experiments>
</comment>
<comment type="subcellular location">
    <subcellularLocation>
        <location evidence="8 10">Cell membrane</location>
        <topology evidence="12">Multi-pass membrane protein</topology>
    </subcellularLocation>
    <subcellularLocation>
        <location evidence="8">Golgi apparatus membrane</location>
        <topology evidence="12">Multi-pass membrane protein</topology>
    </subcellularLocation>
    <subcellularLocation>
        <location evidence="10">Synapse</location>
    </subcellularLocation>
    <subcellularLocation>
        <location evidence="3">Perikaryon</location>
    </subcellularLocation>
    <subcellularLocation>
        <location evidence="3">Cell projection</location>
        <location evidence="3">Dendrite</location>
    </subcellularLocation>
    <subcellularLocation>
        <location evidence="3">Cell projection</location>
        <location evidence="3">Axon</location>
    </subcellularLocation>
    <text evidence="8">Localized at the plasma membrane and also found at the Golgi apparatus.</text>
</comment>
<comment type="tissue specificity">
    <text evidence="10 11">Detected in hippocampus (at protein level) (PubMed:20530549). Expressed in eye, kidney, lung, chondrocytes, epithelial cells of the small intestine and gobelet cells of the colon (PubMed:8626800).</text>
</comment>
<comment type="developmental stage">
    <text evidence="7 10">Detected at low levels in neonate brain; expression levels increase steadily during the first four weeks after birth and show a further increase in adults (at protein level) (PubMed:20530549). Expressed in the yolk sac, placenta, eye and lung bud at 9.5 dpc. At 10.5 dpc, also expressed in the placental blood vessel of embryonic origin (PubMed:11092808).</text>
</comment>
<comment type="domain">
    <text evidence="1">The PDZ-binding motif mediates interaction with GOPC.</text>
</comment>
<comment type="domain">
    <text evidence="1">The FZ domain is involved in binding with Wnt ligands.</text>
</comment>
<comment type="PTM">
    <text evidence="2">Ubiquitinated by RNF43 and ZNRF3, leading to its degradation by the proteasome.</text>
</comment>
<comment type="disruption phenotype">
    <text evidence="7">Full embryonic lethality around 12.5 dpc, due to defects in yolk sac and placenta vascularization.</text>
</comment>
<comment type="similarity">
    <text evidence="12">Belongs to the G-protein coupled receptor Fz/Smo family.</text>
</comment>
<comment type="sequence caution" evidence="12">
    <conflict type="frameshift">
        <sequence resource="EMBL-CDS" id="AAG39355"/>
    </conflict>
</comment>
<gene>
    <name type="primary">Fzd5</name>
</gene>
<evidence type="ECO:0000250" key="1"/>
<evidence type="ECO:0000250" key="2">
    <source>
        <dbReference type="UniProtKB" id="Q13467"/>
    </source>
</evidence>
<evidence type="ECO:0000250" key="3">
    <source>
        <dbReference type="UniProtKB" id="Q8CHL0"/>
    </source>
</evidence>
<evidence type="ECO:0000255" key="4"/>
<evidence type="ECO:0000255" key="5">
    <source>
        <dbReference type="PROSITE-ProRule" id="PRU00090"/>
    </source>
</evidence>
<evidence type="ECO:0000256" key="6">
    <source>
        <dbReference type="SAM" id="MobiDB-lite"/>
    </source>
</evidence>
<evidence type="ECO:0000269" key="7">
    <source>
    </source>
</evidence>
<evidence type="ECO:0000269" key="8">
    <source>
    </source>
</evidence>
<evidence type="ECO:0000269" key="9">
    <source>
    </source>
</evidence>
<evidence type="ECO:0000269" key="10">
    <source>
    </source>
</evidence>
<evidence type="ECO:0000269" key="11">
    <source>
    </source>
</evidence>
<evidence type="ECO:0000305" key="12"/>
<name>FZD5_MOUSE</name>
<organism>
    <name type="scientific">Mus musculus</name>
    <name type="common">Mouse</name>
    <dbReference type="NCBI Taxonomy" id="10090"/>
    <lineage>
        <taxon>Eukaryota</taxon>
        <taxon>Metazoa</taxon>
        <taxon>Chordata</taxon>
        <taxon>Craniata</taxon>
        <taxon>Vertebrata</taxon>
        <taxon>Euteleostomi</taxon>
        <taxon>Mammalia</taxon>
        <taxon>Eutheria</taxon>
        <taxon>Euarchontoglires</taxon>
        <taxon>Glires</taxon>
        <taxon>Rodentia</taxon>
        <taxon>Myomorpha</taxon>
        <taxon>Muroidea</taxon>
        <taxon>Muridae</taxon>
        <taxon>Murinae</taxon>
        <taxon>Mus</taxon>
        <taxon>Mus</taxon>
    </lineage>
</organism>
<keyword id="KW-0002">3D-structure</keyword>
<keyword id="KW-0037">Angiogenesis</keyword>
<keyword id="KW-1003">Cell membrane</keyword>
<keyword id="KW-0966">Cell projection</keyword>
<keyword id="KW-0217">Developmental protein</keyword>
<keyword id="KW-0221">Differentiation</keyword>
<keyword id="KW-1015">Disulfide bond</keyword>
<keyword id="KW-0297">G-protein coupled receptor</keyword>
<keyword id="KW-0325">Glycoprotein</keyword>
<keyword id="KW-0333">Golgi apparatus</keyword>
<keyword id="KW-0446">Lipid-binding</keyword>
<keyword id="KW-0472">Membrane</keyword>
<keyword id="KW-0675">Receptor</keyword>
<keyword id="KW-1185">Reference proteome</keyword>
<keyword id="KW-0732">Signal</keyword>
<keyword id="KW-0770">Synapse</keyword>
<keyword id="KW-0807">Transducer</keyword>
<keyword id="KW-0812">Transmembrane</keyword>
<keyword id="KW-1133">Transmembrane helix</keyword>
<keyword id="KW-0832">Ubl conjugation</keyword>
<keyword id="KW-0879">Wnt signaling pathway</keyword>